<name>DNAK_BARHE</name>
<feature type="chain" id="PRO_0000225938" description="Chaperone protein DnaK">
    <location>
        <begin position="1"/>
        <end position="630"/>
    </location>
</feature>
<feature type="region of interest" description="Disordered" evidence="2">
    <location>
        <begin position="515"/>
        <end position="553"/>
    </location>
</feature>
<feature type="region of interest" description="Disordered" evidence="2">
    <location>
        <begin position="600"/>
        <end position="630"/>
    </location>
</feature>
<feature type="compositionally biased region" description="Basic and acidic residues" evidence="2">
    <location>
        <begin position="515"/>
        <end position="529"/>
    </location>
</feature>
<feature type="compositionally biased region" description="Basic and acidic residues" evidence="2">
    <location>
        <begin position="540"/>
        <end position="553"/>
    </location>
</feature>
<feature type="modified residue" description="Phosphothreonine; by autocatalysis" evidence="1">
    <location>
        <position position="198"/>
    </location>
</feature>
<evidence type="ECO:0000255" key="1">
    <source>
        <dbReference type="HAMAP-Rule" id="MF_00332"/>
    </source>
</evidence>
<evidence type="ECO:0000256" key="2">
    <source>
        <dbReference type="SAM" id="MobiDB-lite"/>
    </source>
</evidence>
<sequence length="630" mass="68261">MAKVIGIDLGTTNSCVAVMDGKNAKVIENSEGARTTPSVVAFTDGGERLVGQPAKRQAVTNPEGTIFAVKRLIGRRFDDPMVEKDKALVPYKIVKGDNGDAWVEEAGKKYSPSQISAMILQKMKETAESYLGEKVEQAVITVPAYFNDAQRQATKDAGKIAGLEVLRIINEPTAAALAYGLDKKDGKTIAVYDLGGGTFDISVLEIGDGVFEVKSTNGDTFLGGEDFDMRLVGYFADEFKKEQGIDLKNDKLALQRLKEAAEKAKIELSSSQQTEINLPFITADQSGPKHLTMKLTRAKFESLVDDLVKRTVEPCKAALKDAGLKAGEIDEVVLVGGMTRMPKIQEVVQSFFGKDPHKGVNPDEVVAMGAAIQGGVLQGDVKDVLLLDVTPLSLGIETLGGVFTRLIERNTTIPTKKSQVFSTADDNQNAVTIRVFQGEREMANDNKLLGQFDLVGIPPAPRGVPQIEVTFDIDANGIVNVSAKDKGTGKEHQIRIQASGGLSDADIEKMVKDAEEHAAEDKKRREGVEARNQAEALIHSTEKSLTEYGDKVSTEEKEQIETAISDLKSVLDSTDTEEVKAKMQKLAEVSMKLGQAMYEASQAATPNTETDTKSDDVVDADFEEINDKKK</sequence>
<proteinExistence type="inferred from homology"/>
<organism>
    <name type="scientific">Bartonella henselae (strain ATCC 49882 / DSM 28221 / CCUG 30454 / Houston 1)</name>
    <name type="common">Rochalimaea henselae</name>
    <dbReference type="NCBI Taxonomy" id="283166"/>
    <lineage>
        <taxon>Bacteria</taxon>
        <taxon>Pseudomonadati</taxon>
        <taxon>Pseudomonadota</taxon>
        <taxon>Alphaproteobacteria</taxon>
        <taxon>Hyphomicrobiales</taxon>
        <taxon>Bartonellaceae</taxon>
        <taxon>Bartonella</taxon>
    </lineage>
</organism>
<keyword id="KW-0067">ATP-binding</keyword>
<keyword id="KW-0143">Chaperone</keyword>
<keyword id="KW-0547">Nucleotide-binding</keyword>
<keyword id="KW-0597">Phosphoprotein</keyword>
<keyword id="KW-0346">Stress response</keyword>
<reference key="1">
    <citation type="journal article" date="2004" name="Proc. Natl. Acad. Sci. U.S.A.">
        <title>The louse-borne human pathogen Bartonella quintana is a genomic derivative of the zoonotic agent Bartonella henselae.</title>
        <authorList>
            <person name="Alsmark U.C.M."/>
            <person name="Frank A.C."/>
            <person name="Karlberg E.O."/>
            <person name="Legault B.-A."/>
            <person name="Ardell D.H."/>
            <person name="Canbaeck B."/>
            <person name="Eriksson A.-S."/>
            <person name="Naeslund A.K."/>
            <person name="Handley S.A."/>
            <person name="Huvet M."/>
            <person name="La Scola B."/>
            <person name="Holmberg M."/>
            <person name="Andersson S.G.E."/>
        </authorList>
    </citation>
    <scope>NUCLEOTIDE SEQUENCE [LARGE SCALE GENOMIC DNA]</scope>
    <source>
        <strain>ATCC 49882 / DSM 28221 / CCUG 30454 / Houston 1</strain>
    </source>
</reference>
<dbReference type="EMBL" id="BX897699">
    <property type="protein sequence ID" value="CAF26881.1"/>
    <property type="molecule type" value="Genomic_DNA"/>
</dbReference>
<dbReference type="RefSeq" id="WP_011180028.1">
    <property type="nucleotide sequence ID" value="NZ_LRIJ02000001.1"/>
</dbReference>
<dbReference type="SMR" id="Q6G554"/>
<dbReference type="PaxDb" id="283166-BH00650"/>
<dbReference type="EnsemblBacteria" id="CAF26881">
    <property type="protein sequence ID" value="CAF26881"/>
    <property type="gene ID" value="BH00650"/>
</dbReference>
<dbReference type="GeneID" id="92986352"/>
<dbReference type="KEGG" id="bhe:BH00650"/>
<dbReference type="eggNOG" id="COG0443">
    <property type="taxonomic scope" value="Bacteria"/>
</dbReference>
<dbReference type="OrthoDB" id="9766019at2"/>
<dbReference type="Proteomes" id="UP000000421">
    <property type="component" value="Chromosome"/>
</dbReference>
<dbReference type="GO" id="GO:0005524">
    <property type="term" value="F:ATP binding"/>
    <property type="evidence" value="ECO:0007669"/>
    <property type="project" value="UniProtKB-UniRule"/>
</dbReference>
<dbReference type="GO" id="GO:0140662">
    <property type="term" value="F:ATP-dependent protein folding chaperone"/>
    <property type="evidence" value="ECO:0007669"/>
    <property type="project" value="InterPro"/>
</dbReference>
<dbReference type="GO" id="GO:0051082">
    <property type="term" value="F:unfolded protein binding"/>
    <property type="evidence" value="ECO:0007669"/>
    <property type="project" value="InterPro"/>
</dbReference>
<dbReference type="CDD" id="cd11733">
    <property type="entry name" value="ASKHA_NBD_HSP70_HSPA9"/>
    <property type="match status" value="1"/>
</dbReference>
<dbReference type="FunFam" id="2.60.34.10:FF:000014">
    <property type="entry name" value="Chaperone protein DnaK HSP70"/>
    <property type="match status" value="1"/>
</dbReference>
<dbReference type="FunFam" id="3.30.30.30:FF:000003">
    <property type="entry name" value="Heat shock protein 9"/>
    <property type="match status" value="1"/>
</dbReference>
<dbReference type="FunFam" id="1.20.1270.10:FF:000001">
    <property type="entry name" value="Molecular chaperone DnaK"/>
    <property type="match status" value="1"/>
</dbReference>
<dbReference type="FunFam" id="3.30.420.40:FF:000004">
    <property type="entry name" value="Molecular chaperone DnaK"/>
    <property type="match status" value="1"/>
</dbReference>
<dbReference type="FunFam" id="3.90.640.10:FF:000003">
    <property type="entry name" value="Molecular chaperone DnaK"/>
    <property type="match status" value="1"/>
</dbReference>
<dbReference type="Gene3D" id="1.20.1270.10">
    <property type="match status" value="1"/>
</dbReference>
<dbReference type="Gene3D" id="3.30.420.40">
    <property type="match status" value="2"/>
</dbReference>
<dbReference type="Gene3D" id="3.90.640.10">
    <property type="entry name" value="Actin, Chain A, domain 4"/>
    <property type="match status" value="1"/>
</dbReference>
<dbReference type="Gene3D" id="2.60.34.10">
    <property type="entry name" value="Substrate Binding Domain Of DNAk, Chain A, domain 1"/>
    <property type="match status" value="1"/>
</dbReference>
<dbReference type="HAMAP" id="MF_00332">
    <property type="entry name" value="DnaK"/>
    <property type="match status" value="1"/>
</dbReference>
<dbReference type="InterPro" id="IPR043129">
    <property type="entry name" value="ATPase_NBD"/>
</dbReference>
<dbReference type="InterPro" id="IPR012725">
    <property type="entry name" value="Chaperone_DnaK"/>
</dbReference>
<dbReference type="InterPro" id="IPR018181">
    <property type="entry name" value="Heat_shock_70_CS"/>
</dbReference>
<dbReference type="InterPro" id="IPR029048">
    <property type="entry name" value="HSP70_C_sf"/>
</dbReference>
<dbReference type="InterPro" id="IPR029047">
    <property type="entry name" value="HSP70_peptide-bd_sf"/>
</dbReference>
<dbReference type="InterPro" id="IPR013126">
    <property type="entry name" value="Hsp_70_fam"/>
</dbReference>
<dbReference type="NCBIfam" id="NF001413">
    <property type="entry name" value="PRK00290.1"/>
    <property type="match status" value="1"/>
</dbReference>
<dbReference type="NCBIfam" id="NF003520">
    <property type="entry name" value="PRK05183.1"/>
    <property type="match status" value="1"/>
</dbReference>
<dbReference type="NCBIfam" id="TIGR02350">
    <property type="entry name" value="prok_dnaK"/>
    <property type="match status" value="1"/>
</dbReference>
<dbReference type="PANTHER" id="PTHR19375">
    <property type="entry name" value="HEAT SHOCK PROTEIN 70KDA"/>
    <property type="match status" value="1"/>
</dbReference>
<dbReference type="Pfam" id="PF00012">
    <property type="entry name" value="HSP70"/>
    <property type="match status" value="1"/>
</dbReference>
<dbReference type="PRINTS" id="PR00301">
    <property type="entry name" value="HEATSHOCK70"/>
</dbReference>
<dbReference type="SUPFAM" id="SSF53067">
    <property type="entry name" value="Actin-like ATPase domain"/>
    <property type="match status" value="2"/>
</dbReference>
<dbReference type="SUPFAM" id="SSF100934">
    <property type="entry name" value="Heat shock protein 70kD (HSP70), C-terminal subdomain"/>
    <property type="match status" value="1"/>
</dbReference>
<dbReference type="SUPFAM" id="SSF100920">
    <property type="entry name" value="Heat shock protein 70kD (HSP70), peptide-binding domain"/>
    <property type="match status" value="1"/>
</dbReference>
<dbReference type="PROSITE" id="PS00297">
    <property type="entry name" value="HSP70_1"/>
    <property type="match status" value="1"/>
</dbReference>
<dbReference type="PROSITE" id="PS00329">
    <property type="entry name" value="HSP70_2"/>
    <property type="match status" value="1"/>
</dbReference>
<dbReference type="PROSITE" id="PS01036">
    <property type="entry name" value="HSP70_3"/>
    <property type="match status" value="1"/>
</dbReference>
<gene>
    <name evidence="1" type="primary">dnaK</name>
    <name type="ordered locus">BH00650</name>
</gene>
<accession>Q6G554</accession>
<protein>
    <recommendedName>
        <fullName evidence="1">Chaperone protein DnaK</fullName>
    </recommendedName>
    <alternativeName>
        <fullName evidence="1">HSP70</fullName>
    </alternativeName>
    <alternativeName>
        <fullName evidence="1">Heat shock 70 kDa protein</fullName>
    </alternativeName>
    <alternativeName>
        <fullName evidence="1">Heat shock protein 70</fullName>
    </alternativeName>
</protein>
<comment type="function">
    <text evidence="1">Acts as a chaperone.</text>
</comment>
<comment type="induction">
    <text evidence="1">By stress conditions e.g. heat shock.</text>
</comment>
<comment type="similarity">
    <text evidence="1">Belongs to the heat shock protein 70 family.</text>
</comment>